<comment type="function">
    <text evidence="1">Indispensable for the control of thyroid structure and metabolism. May play some role in the biological processes of the immature fishes (By similarity).</text>
</comment>
<comment type="subunit">
    <text evidence="1">Heterodimer of a common alpha chain and a unique beta chain which confers biological specificity to thyrotropin, lutropin, follitropin and gonadotropin.</text>
</comment>
<comment type="subcellular location">
    <subcellularLocation>
        <location evidence="1">Secreted</location>
    </subcellularLocation>
</comment>
<comment type="similarity">
    <text evidence="3">Belongs to the glycoprotein hormones subunit beta family.</text>
</comment>
<feature type="signal peptide" evidence="1">
    <location>
        <begin position="1"/>
        <end position="20"/>
    </location>
</feature>
<feature type="chain" id="PRO_0000011758" description="Thyrotropin subunit beta">
    <location>
        <begin position="21"/>
        <end position="147"/>
    </location>
</feature>
<feature type="glycosylation site" description="N-linked (GlcNAc...) asparagine" evidence="2">
    <location>
        <position position="43"/>
    </location>
</feature>
<feature type="disulfide bond" evidence="1">
    <location>
        <begin position="22"/>
        <end position="72"/>
    </location>
</feature>
<feature type="disulfide bond" evidence="1">
    <location>
        <begin position="36"/>
        <end position="87"/>
    </location>
</feature>
<feature type="disulfide bond" evidence="1">
    <location>
        <begin position="39"/>
        <end position="126"/>
    </location>
</feature>
<feature type="disulfide bond" evidence="1">
    <location>
        <begin position="47"/>
        <end position="103"/>
    </location>
</feature>
<feature type="disulfide bond" evidence="1">
    <location>
        <begin position="51"/>
        <end position="105"/>
    </location>
</feature>
<feature type="disulfide bond" evidence="1">
    <location>
        <begin position="108"/>
        <end position="115"/>
    </location>
</feature>
<proteinExistence type="evidence at transcript level"/>
<organism>
    <name type="scientific">Anguilla japonica</name>
    <name type="common">Japanese eel</name>
    <dbReference type="NCBI Taxonomy" id="7937"/>
    <lineage>
        <taxon>Eukaryota</taxon>
        <taxon>Metazoa</taxon>
        <taxon>Chordata</taxon>
        <taxon>Craniata</taxon>
        <taxon>Vertebrata</taxon>
        <taxon>Euteleostomi</taxon>
        <taxon>Actinopterygii</taxon>
        <taxon>Neopterygii</taxon>
        <taxon>Teleostei</taxon>
        <taxon>Anguilliformes</taxon>
        <taxon>Anguillidae</taxon>
        <taxon>Anguilla</taxon>
    </lineage>
</organism>
<reference key="1">
    <citation type="submission" date="2002-10" db="EMBL/GenBank/DDBJ databases">
        <title>Molecular cloning of the genomic DNA and cDNA encoding thyroid stimulating hormone beta subunit of the Japanese eel and its gene expression.</title>
        <authorList>
            <person name="Han Y.-S."/>
            <person name="Liao I.-C."/>
            <person name="Tzeng W.-N."/>
            <person name="Huang Y.-S."/>
            <person name="Yu J.Y.-L."/>
        </authorList>
    </citation>
    <scope>NUCLEOTIDE SEQUENCE [GENOMIC DNA]</scope>
</reference>
<reference key="2">
    <citation type="submission" date="2004-03" db="EMBL/GenBank/DDBJ databases">
        <title>Molecular cloning of Japanese eel TSH beta.</title>
        <authorList>
            <person name="Nagae M."/>
            <person name="Qu X.C."/>
            <person name="Kazeto Y."/>
            <person name="Ijiri S."/>
            <person name="Ito F."/>
            <person name="Adachi S."/>
            <person name="Yamauchi K."/>
        </authorList>
    </citation>
    <scope>NUCLEOTIDE SEQUENCE [MRNA]</scope>
    <source>
        <tissue>Pituitary</tissue>
    </source>
</reference>
<protein>
    <recommendedName>
        <fullName>Thyrotropin subunit beta</fullName>
    </recommendedName>
    <alternativeName>
        <fullName>Thyroid-stimulating hormone subunit beta</fullName>
        <shortName>TSH-B</shortName>
        <shortName>TSH-beta</shortName>
    </alternativeName>
    <alternativeName>
        <fullName>Thyrotropin beta chain</fullName>
    </alternativeName>
</protein>
<gene>
    <name type="primary">tshb</name>
</gene>
<accession>Q7ZZV4</accession>
<name>TSHB_ANGJA</name>
<dbReference type="EMBL" id="AY158008">
    <property type="protein sequence ID" value="AAO17791.1"/>
    <property type="molecule type" value="Genomic_DNA"/>
</dbReference>
<dbReference type="EMBL" id="AB175833">
    <property type="protein sequence ID" value="BAD14300.1"/>
    <property type="molecule type" value="mRNA"/>
</dbReference>
<dbReference type="SMR" id="Q7ZZV4"/>
<dbReference type="GlyCosmos" id="Q7ZZV4">
    <property type="glycosylation" value="1 site, No reported glycans"/>
</dbReference>
<dbReference type="GO" id="GO:0005737">
    <property type="term" value="C:cytoplasm"/>
    <property type="evidence" value="ECO:0007669"/>
    <property type="project" value="TreeGrafter"/>
</dbReference>
<dbReference type="GO" id="GO:0005615">
    <property type="term" value="C:extracellular space"/>
    <property type="evidence" value="ECO:0007669"/>
    <property type="project" value="TreeGrafter"/>
</dbReference>
<dbReference type="GO" id="GO:0005179">
    <property type="term" value="F:hormone activity"/>
    <property type="evidence" value="ECO:0007669"/>
    <property type="project" value="UniProtKB-KW"/>
</dbReference>
<dbReference type="GO" id="GO:0007186">
    <property type="term" value="P:G protein-coupled receptor signaling pathway"/>
    <property type="evidence" value="ECO:0007669"/>
    <property type="project" value="TreeGrafter"/>
</dbReference>
<dbReference type="CDD" id="cd00069">
    <property type="entry name" value="GHB_like"/>
    <property type="match status" value="1"/>
</dbReference>
<dbReference type="FunFam" id="2.10.90.10:FF:000007">
    <property type="entry name" value="Luteinizing hormone beta subunit"/>
    <property type="match status" value="1"/>
</dbReference>
<dbReference type="Gene3D" id="2.10.90.10">
    <property type="entry name" value="Cystine-knot cytokines"/>
    <property type="match status" value="1"/>
</dbReference>
<dbReference type="InterPro" id="IPR029034">
    <property type="entry name" value="Cystine-knot_cytokine"/>
</dbReference>
<dbReference type="InterPro" id="IPR006208">
    <property type="entry name" value="Glyco_hormone_CN"/>
</dbReference>
<dbReference type="InterPro" id="IPR001545">
    <property type="entry name" value="Gonadotropin_bsu"/>
</dbReference>
<dbReference type="InterPro" id="IPR018245">
    <property type="entry name" value="Gonadotropin_bsu_CS"/>
</dbReference>
<dbReference type="PANTHER" id="PTHR11515">
    <property type="entry name" value="GLYCOPROTEIN HORMONE BETA CHAIN"/>
    <property type="match status" value="1"/>
</dbReference>
<dbReference type="PANTHER" id="PTHR11515:SF5">
    <property type="entry name" value="THYROTROPIN SUBUNIT BETA"/>
    <property type="match status" value="1"/>
</dbReference>
<dbReference type="Pfam" id="PF00007">
    <property type="entry name" value="Cys_knot"/>
    <property type="match status" value="1"/>
</dbReference>
<dbReference type="SMART" id="SM00068">
    <property type="entry name" value="GHB"/>
    <property type="match status" value="1"/>
</dbReference>
<dbReference type="SUPFAM" id="SSF57501">
    <property type="entry name" value="Cystine-knot cytokines"/>
    <property type="match status" value="1"/>
</dbReference>
<dbReference type="PROSITE" id="PS00261">
    <property type="entry name" value="GLYCO_HORMONE_BETA_1"/>
    <property type="match status" value="1"/>
</dbReference>
<dbReference type="PROSITE" id="PS00689">
    <property type="entry name" value="GLYCO_HORMONE_BETA_2"/>
    <property type="match status" value="1"/>
</dbReference>
<sequence>MRVVLLASGVLCLLAGQVLSICSPVDYTLYVEKPECDFCVAINTTICMGFCYSLDPNVVGPAVKRLAVQRGCTYQAVEYRTAELPGCPPHVDPRFSYPVALHCTCRACDPARDECTHRASADGDRCSKPLLLHMHAYPGQSNHIQTL</sequence>
<evidence type="ECO:0000250" key="1"/>
<evidence type="ECO:0000255" key="2"/>
<evidence type="ECO:0000305" key="3"/>
<keyword id="KW-1015">Disulfide bond</keyword>
<keyword id="KW-0325">Glycoprotein</keyword>
<keyword id="KW-0372">Hormone</keyword>
<keyword id="KW-0964">Secreted</keyword>
<keyword id="KW-0732">Signal</keyword>